<name>PAM_TAXCH</name>
<protein>
    <recommendedName>
        <fullName>Phenylalanine aminomutase (L-beta-phenylalanine forming)</fullName>
        <ecNumber evidence="4 5">5.4.3.10</ecNumber>
    </recommendedName>
    <alternativeName>
        <fullName>Phenylalanine ammonia-lyase</fullName>
        <ecNumber evidence="3">4.3.1.24</ecNumber>
    </alternativeName>
</protein>
<comment type="function">
    <text evidence="4 5 6">Phenylalanine aminomutase that catalyzes the rearrangement of L-phenylalanine to R-beta-phenylalanine. Catalyzes the first committed step in the biosynthesis of the side chain of the alkaloid taxol (paclitaxel), a widely-used compound with antitumor activity. Also has low phenylalanine ammonia-lyase activity and can catalyze the amination of trans-cinnamate.</text>
</comment>
<comment type="catalytic activity">
    <reaction evidence="4 5">
        <text>L-phenylalanine = L-beta-phenylalanine</text>
        <dbReference type="Rhea" id="RHEA:34395"/>
        <dbReference type="ChEBI" id="CHEBI:58095"/>
        <dbReference type="ChEBI" id="CHEBI:67158"/>
        <dbReference type="EC" id="5.4.3.10"/>
    </reaction>
</comment>
<comment type="catalytic activity">
    <reaction evidence="3">
        <text>L-phenylalanine = (E)-cinnamate + NH4(+)</text>
        <dbReference type="Rhea" id="RHEA:21384"/>
        <dbReference type="ChEBI" id="CHEBI:15669"/>
        <dbReference type="ChEBI" id="CHEBI:28938"/>
        <dbReference type="ChEBI" id="CHEBI:58095"/>
        <dbReference type="EC" id="4.3.1.24"/>
    </reaction>
</comment>
<comment type="biophysicochemical properties">
    <kinetics>
        <KM evidence="4 5">1.1 mM for L-phenylalanine</KM>
        <Vmax evidence="4 5">110.0 umol/min/mg enzyme with L-phenylalanine as substrate</Vmax>
    </kinetics>
    <phDependence>
        <text evidence="4 5">Optimum pH is 7.5-8.0.</text>
    </phDependence>
</comment>
<comment type="pathway">
    <text>Alkaloid biosynthesis; taxol biosynthesis.</text>
</comment>
<comment type="pathway">
    <text evidence="7">Phenylpropanoid metabolism; trans-cinnamate biosynthesis; trans-cinnamate from L-phenylalanine: step 1/1.</text>
</comment>
<comment type="subunit">
    <text evidence="4 6">Homodimer (PubMed:15878763). Homotetramer, dimer of dimers (PubMed:24786474).</text>
</comment>
<comment type="subcellular location">
    <subcellularLocation>
        <location evidence="1">Cytoplasm</location>
    </subcellularLocation>
</comment>
<comment type="PTM">
    <text evidence="6">Contains an active site 4-methylidene-imidazol-5-one (MIO), which is formed autocatalytically by cyclization and dehydration of residues Ala-Ser-Gly.</text>
</comment>
<comment type="biotechnology">
    <text evidence="5">Could be used for the stereoselective biosynthesis of beta-amino acids via amination of cinnamic acid derivatives.</text>
</comment>
<comment type="similarity">
    <text evidence="7">Belongs to the PAL/histidase family.</text>
</comment>
<proteinExistence type="evidence at protein level"/>
<reference key="1">
    <citation type="journal article" date="2005" name="Arch. Biochem. Biophys.">
        <title>Purification, cloning, and functional expression of phenylalanine aminomutase: the first committed step in Taxol side-chain biosynthesis.</title>
        <authorList>
            <person name="Steele C.L."/>
            <person name="Chen Y."/>
            <person name="Dougherty B.A."/>
            <person name="Li W."/>
            <person name="Hofstead S."/>
            <person name="Lam K.S."/>
            <person name="Xing Z."/>
            <person name="Chiang S.J."/>
        </authorList>
    </citation>
    <scope>NUCLEOTIDE SEQUENCE [MRNA]</scope>
    <scope>PARTIAL PROTEIN SEQUENCE</scope>
    <scope>CATALYTIC ACTIVITY</scope>
    <scope>FUNCTION</scope>
    <scope>BIOPHYSICOCHEMICAL PROPERTIES</scope>
    <scope>SUBUNIT</scope>
</reference>
<reference key="2">
    <citation type="journal article" date="2012" name="Angew. Chem. Int. Ed.">
        <title>Mechanism-inspired engineering of phenylalanine aminomutase for enhanced beta-regioselective asymmetric amination of cinnamates.</title>
        <authorList>
            <person name="Wu B."/>
            <person name="Szymanski W."/>
            <person name="Wybenga G.G."/>
            <person name="Heberling M.M."/>
            <person name="Bartsch S."/>
            <person name="de Wildeman S."/>
            <person name="Poelarends G.J."/>
            <person name="Feringa B.L."/>
            <person name="Dijkstra B.W."/>
            <person name="Janssen D.B."/>
        </authorList>
    </citation>
    <scope>X-RAY CRYSTALLOGRAPHY (2.18 ANGSTROMS)</scope>
    <scope>FUNCTION</scope>
    <scope>CATALYTIC ACTIVITY</scope>
    <scope>BIOPHYSICOCHEMICAL PROPERTIES</scope>
    <scope>BIOTECHNOLOGY</scope>
    <scope>MUTAGENESIS OF ASN-231; GLN-319; TYR-322; ARG-325; ASN-355 AND PHE-371</scope>
    <scope>ACTIVE SITE</scope>
    <scope>PTM</scope>
</reference>
<reference key="3">
    <citation type="journal article" date="2014" name="Biochemistry">
        <title>Structural investigations into the stereochemistry and activity of a phenylalanine-2,3-aminomutase from Taxus chinensis.</title>
        <authorList>
            <person name="Wybenga G.G."/>
            <person name="Szymanski W."/>
            <person name="Wu B."/>
            <person name="Feringa B.L."/>
            <person name="Janssen D.B."/>
            <person name="Dijkstra B.W."/>
        </authorList>
    </citation>
    <scope>X-RAY CRYSTALLOGRAPHY (1.85 ANGSTROMS) IN COMPLEX WITH TRANS-CINNAMATE</scope>
    <scope>FUNCTION</scope>
    <scope>ACTIVE SITE</scope>
    <scope>PTM</scope>
    <scope>DEHYDRATION AT SER-176</scope>
    <scope>SUBUNIT</scope>
    <scope>MUTAGENESIS OF TYR-80; ASN-231 AND TYR-322</scope>
</reference>
<feature type="chain" id="PRO_0000429970" description="Phenylalanine aminomutase (L-beta-phenylalanine forming)">
    <location>
        <begin position="1"/>
        <end position="687"/>
    </location>
</feature>
<feature type="active site" description="Proton donor/acceptor" evidence="5 6">
    <location>
        <position position="80"/>
    </location>
</feature>
<feature type="binding site" evidence="6 8">
    <location>
        <position position="231"/>
    </location>
    <ligand>
        <name>(E)-cinnamate</name>
        <dbReference type="ChEBI" id="CHEBI:15669"/>
    </ligand>
</feature>
<feature type="binding site" evidence="6 8">
    <location>
        <position position="319"/>
    </location>
    <ligand>
        <name>(E)-cinnamate</name>
        <dbReference type="ChEBI" id="CHEBI:15669"/>
    </ligand>
</feature>
<feature type="binding site" evidence="6 8">
    <location>
        <position position="325"/>
    </location>
    <ligand>
        <name>(E)-cinnamate</name>
        <dbReference type="ChEBI" id="CHEBI:15669"/>
    </ligand>
</feature>
<feature type="binding site" evidence="6 8">
    <location>
        <position position="355"/>
    </location>
    <ligand>
        <name>(E)-cinnamate</name>
        <dbReference type="ChEBI" id="CHEBI:15669"/>
    </ligand>
</feature>
<feature type="binding site" evidence="2">
    <location>
        <position position="427"/>
    </location>
    <ligand>
        <name>(E)-cinnamate</name>
        <dbReference type="ChEBI" id="CHEBI:15669"/>
    </ligand>
</feature>
<feature type="binding site" evidence="2">
    <location>
        <position position="455"/>
    </location>
    <ligand>
        <name>(E)-cinnamate</name>
        <dbReference type="ChEBI" id="CHEBI:15669"/>
    </ligand>
</feature>
<feature type="binding site" evidence="6 8">
    <location>
        <position position="458"/>
    </location>
    <ligand>
        <name>(E)-cinnamate</name>
        <dbReference type="ChEBI" id="CHEBI:15669"/>
    </ligand>
</feature>
<feature type="modified residue" description="2,3-didehydroalanine (Ser)" evidence="6">
    <location>
        <position position="176"/>
    </location>
</feature>
<feature type="cross-link" description="5-imidazolinone (Ala-Gly)" evidence="6">
    <location>
        <begin position="175"/>
        <end position="177"/>
    </location>
</feature>
<feature type="mutagenesis site" description="Abolishes enzyme activity." evidence="6">
    <original>Y</original>
    <variation>A</variation>
    <variation>F</variation>
    <location>
        <position position="80"/>
    </location>
</feature>
<feature type="mutagenesis site" description="Abolishes the formation of the MIO cofactor and thereby abolishes enzyme activity." evidence="5 6">
    <original>N</original>
    <variation>A</variation>
    <location>
        <position position="231"/>
    </location>
</feature>
<feature type="mutagenesis site" description="Abolishes enzyme activity; when associated with X-355." evidence="5 6">
    <original>N</original>
    <variation>X</variation>
    <location>
        <position position="231"/>
    </location>
</feature>
<feature type="mutagenesis site" description="Increases deamination activity with beta-Phe. Increases beta-regioselectivity in the amination of cinnamate. Abolishes enzyme activity; when associated with K-325." evidence="5">
    <original>Q</original>
    <variation>M</variation>
    <location>
        <position position="319"/>
    </location>
</feature>
<feature type="mutagenesis site" description="Abolishes the formation of the MIO cofactor and thereby abolishes enzyme activity." evidence="5 6">
    <original>Y</original>
    <variation>A</variation>
    <location>
        <position position="322"/>
    </location>
</feature>
<feature type="mutagenesis site" description="Abolishes enzyme activity; when associated with X-371." evidence="5 6">
    <original>Y</original>
    <variation>X</variation>
    <location>
        <position position="322"/>
    </location>
</feature>
<feature type="mutagenesis site" description="Increases deamination activity with beta-Phe. Increases beta-regioselectivity in the amination of cinnamate. Abolishes enzyme activity; when associated with M-319." evidence="5">
    <original>R</original>
    <variation>K</variation>
    <location>
        <position position="325"/>
    </location>
</feature>
<feature type="mutagenesis site" description="Abolishes enzyme activity; when associated with X-231." evidence="5">
    <original>N</original>
    <variation>X</variation>
    <location>
        <position position="355"/>
    </location>
</feature>
<feature type="mutagenesis site" description="Abolishes enzyme activity; when associated with X-322." evidence="5">
    <original>F</original>
    <variation>X</variation>
    <location>
        <position position="371"/>
    </location>
</feature>
<feature type="helix" evidence="10">
    <location>
        <begin position="10"/>
        <end position="23"/>
    </location>
</feature>
<feature type="strand" evidence="10">
    <location>
        <begin position="26"/>
        <end position="33"/>
    </location>
</feature>
<feature type="helix" evidence="10">
    <location>
        <begin position="37"/>
        <end position="45"/>
    </location>
</feature>
<feature type="strand" evidence="10">
    <location>
        <begin position="50"/>
        <end position="53"/>
    </location>
</feature>
<feature type="helix" evidence="10">
    <location>
        <begin position="55"/>
        <end position="74"/>
    </location>
</feature>
<feature type="turn" evidence="10">
    <location>
        <begin position="80"/>
        <end position="82"/>
    </location>
</feature>
<feature type="helix" evidence="10">
    <location>
        <begin position="87"/>
        <end position="89"/>
    </location>
</feature>
<feature type="helix" evidence="10">
    <location>
        <begin position="97"/>
        <end position="108"/>
    </location>
</feature>
<feature type="helix" evidence="10">
    <location>
        <begin position="126"/>
        <end position="140"/>
    </location>
</feature>
<feature type="helix" evidence="10">
    <location>
        <begin position="149"/>
        <end position="160"/>
    </location>
</feature>
<feature type="strand" evidence="10">
    <location>
        <begin position="163"/>
        <end position="165"/>
    </location>
</feature>
<feature type="strand" evidence="11">
    <location>
        <begin position="174"/>
        <end position="176"/>
    </location>
</feature>
<feature type="helix" evidence="10">
    <location>
        <begin position="179"/>
        <end position="189"/>
    </location>
</feature>
<feature type="strand" evidence="10">
    <location>
        <begin position="196"/>
        <end position="199"/>
    </location>
</feature>
<feature type="turn" evidence="10">
    <location>
        <begin position="200"/>
        <end position="202"/>
    </location>
</feature>
<feature type="strand" evidence="10">
    <location>
        <begin position="203"/>
        <end position="206"/>
    </location>
</feature>
<feature type="helix" evidence="10">
    <location>
        <begin position="207"/>
        <end position="213"/>
    </location>
</feature>
<feature type="helix" evidence="10">
    <location>
        <begin position="225"/>
        <end position="230"/>
    </location>
</feature>
<feature type="strand" evidence="11">
    <location>
        <begin position="231"/>
        <end position="233"/>
    </location>
</feature>
<feature type="helix" evidence="10">
    <location>
        <begin position="234"/>
        <end position="265"/>
    </location>
</feature>
<feature type="helix" evidence="10">
    <location>
        <begin position="269"/>
        <end position="272"/>
    </location>
</feature>
<feature type="helix" evidence="10">
    <location>
        <begin position="274"/>
        <end position="278"/>
    </location>
</feature>
<feature type="helix" evidence="10">
    <location>
        <begin position="283"/>
        <end position="296"/>
    </location>
</feature>
<feature type="helix" evidence="10">
    <location>
        <begin position="300"/>
        <end position="310"/>
    </location>
</feature>
<feature type="helix" evidence="10">
    <location>
        <begin position="313"/>
        <end position="315"/>
    </location>
</feature>
<feature type="helix" evidence="10">
    <location>
        <begin position="322"/>
        <end position="325"/>
    </location>
</feature>
<feature type="helix" evidence="10">
    <location>
        <begin position="327"/>
        <end position="349"/>
    </location>
</feature>
<feature type="strand" evidence="10">
    <location>
        <begin position="355"/>
        <end position="359"/>
    </location>
</feature>
<feature type="helix" evidence="10">
    <location>
        <begin position="360"/>
        <end position="362"/>
    </location>
</feature>
<feature type="strand" evidence="10">
    <location>
        <begin position="364"/>
        <end position="366"/>
    </location>
</feature>
<feature type="helix" evidence="10">
    <location>
        <begin position="374"/>
        <end position="402"/>
    </location>
</feature>
<feature type="helix" evidence="10">
    <location>
        <begin position="404"/>
        <end position="406"/>
    </location>
</feature>
<feature type="turn" evidence="10">
    <location>
        <begin position="407"/>
        <end position="409"/>
    </location>
</feature>
<feature type="helix" evidence="10">
    <location>
        <begin position="412"/>
        <end position="414"/>
    </location>
</feature>
<feature type="helix" evidence="10">
    <location>
        <begin position="420"/>
        <end position="422"/>
    </location>
</feature>
<feature type="helix" evidence="10">
    <location>
        <begin position="427"/>
        <end position="443"/>
    </location>
</feature>
<feature type="helix" evidence="10">
    <location>
        <begin position="448"/>
        <end position="450"/>
    </location>
</feature>
<feature type="turn" evidence="10">
    <location>
        <begin position="455"/>
        <end position="458"/>
    </location>
</feature>
<feature type="strand" evidence="10">
    <location>
        <begin position="459"/>
        <end position="461"/>
    </location>
</feature>
<feature type="helix" evidence="10">
    <location>
        <begin position="465"/>
        <end position="517"/>
    </location>
</feature>
<feature type="helix" evidence="10">
    <location>
        <begin position="522"/>
        <end position="534"/>
    </location>
</feature>
<feature type="helix" evidence="10">
    <location>
        <begin position="537"/>
        <end position="539"/>
    </location>
</feature>
<feature type="turn" evidence="10">
    <location>
        <begin position="540"/>
        <end position="542"/>
    </location>
</feature>
<feature type="helix" evidence="10">
    <location>
        <begin position="550"/>
        <end position="565"/>
    </location>
</feature>
<feature type="helix" evidence="10">
    <location>
        <begin position="575"/>
        <end position="603"/>
    </location>
</feature>
<feature type="strand" evidence="13">
    <location>
        <begin position="613"/>
        <end position="615"/>
    </location>
</feature>
<feature type="helix" evidence="10">
    <location>
        <begin position="619"/>
        <end position="622"/>
    </location>
</feature>
<feature type="helix" evidence="10">
    <location>
        <begin position="626"/>
        <end position="633"/>
    </location>
</feature>
<feature type="turn" evidence="10">
    <location>
        <begin position="634"/>
        <end position="637"/>
    </location>
</feature>
<feature type="strand" evidence="9">
    <location>
        <begin position="642"/>
        <end position="644"/>
    </location>
</feature>
<feature type="helix" evidence="10">
    <location>
        <begin position="649"/>
        <end position="661"/>
    </location>
</feature>
<feature type="turn" evidence="12">
    <location>
        <begin position="662"/>
        <end position="665"/>
    </location>
</feature>
<feature type="helix" evidence="10">
    <location>
        <begin position="666"/>
        <end position="672"/>
    </location>
</feature>
<feature type="turn" evidence="10">
    <location>
        <begin position="673"/>
        <end position="675"/>
    </location>
</feature>
<sequence length="687" mass="75332">MGFAVESRSHVKDILGLINAFNEVKKITVDGTTPITVAHVAALARRHDVKVALEAEQCRARVETCSSWVQRKAEDGADIYGVTTGFGACSSRRTNRLSELQESLIRCLLAGVFTKGCAPSVDELPATATRSAMLLRLNSFTYGCSGIRWEVMEALEKLLNSNVSPKVPLRGSVSASGDLIPLAYIAGLLIGKPSVIARIGDDVEVPAPEALSRVGLRPFKLQAKEGLALVNGTSFATAVASTVMYDANVLLLLVETLCGMFCEVIFGREEFAHPLIHKVKPHPGQIESAELLEWLLRSSPFQELSREYYSIDKLKKPKQDRYALRSSPQWLAPLVQTIRDATTTVETEVNSANDNPIIDHANDRALHGANFQGSAVGFYMDYVRIAVAGLGKLLFAQFTELMIEYYSNGLPGNLSLGPDLSVDYGLKGLDIAMAAYSSELQYLANPVTTHVHSAEQHNQDINSLALISARKTEEALDILKLMIASHLTAMCQAVDLRQLEEALVKVVENVVSTLADECGLPNDTKARLLYVAKAVPVYTYLESPCDPTLPLLLGLKQSCFDTILALHKKDGIETDTLVDRLAEFEKRLSDRLENEMTAVRVLYEKKGHKTADNNDALVRIQGSKFLPFYRFVREELDTGVMSARREQTPQEDVQKVFDAIADGRITVPLLHCLQGFLGQPNGCANGV</sequence>
<evidence type="ECO:0000250" key="1"/>
<evidence type="ECO:0000250" key="2">
    <source>
        <dbReference type="UniProtKB" id="P11544"/>
    </source>
</evidence>
<evidence type="ECO:0000250" key="3">
    <source>
        <dbReference type="UniProtKB" id="Q6GZ04"/>
    </source>
</evidence>
<evidence type="ECO:0000269" key="4">
    <source>
    </source>
</evidence>
<evidence type="ECO:0000269" key="5">
    <source>
    </source>
</evidence>
<evidence type="ECO:0000269" key="6">
    <source>
    </source>
</evidence>
<evidence type="ECO:0000305" key="7"/>
<evidence type="ECO:0007744" key="8">
    <source>
        <dbReference type="PDB" id="4CQ5"/>
    </source>
</evidence>
<evidence type="ECO:0007829" key="9">
    <source>
        <dbReference type="PDB" id="4BAA"/>
    </source>
</evidence>
<evidence type="ECO:0007829" key="10">
    <source>
        <dbReference type="PDB" id="4C5S"/>
    </source>
</evidence>
<evidence type="ECO:0007829" key="11">
    <source>
        <dbReference type="PDB" id="4C6G"/>
    </source>
</evidence>
<evidence type="ECO:0007829" key="12">
    <source>
        <dbReference type="PDB" id="4CQ5"/>
    </source>
</evidence>
<evidence type="ECO:0007829" key="13">
    <source>
        <dbReference type="PDB" id="4V2R"/>
    </source>
</evidence>
<keyword id="KW-0002">3D-structure</keyword>
<keyword id="KW-0017">Alkaloid metabolism</keyword>
<keyword id="KW-0963">Cytoplasm</keyword>
<keyword id="KW-0903">Direct protein sequencing</keyword>
<keyword id="KW-0413">Isomerase</keyword>
<keyword id="KW-0456">Lyase</keyword>
<keyword id="KW-0585">Phenylalanine catabolism</keyword>
<keyword id="KW-0587">Phenylpropanoid metabolism</keyword>
<keyword id="KW-0876">Taxol biosynthesis</keyword>
<accession>Q68G84</accession>
<organism>
    <name type="scientific">Taxus chinensis</name>
    <name type="common">Chinese yew</name>
    <name type="synonym">Taxus wallichiana var. chinensis</name>
    <dbReference type="NCBI Taxonomy" id="29808"/>
    <lineage>
        <taxon>Eukaryota</taxon>
        <taxon>Viridiplantae</taxon>
        <taxon>Streptophyta</taxon>
        <taxon>Embryophyta</taxon>
        <taxon>Tracheophyta</taxon>
        <taxon>Spermatophyta</taxon>
        <taxon>Pinopsida</taxon>
        <taxon>Pinidae</taxon>
        <taxon>Conifers II</taxon>
        <taxon>Cupressales</taxon>
        <taxon>Taxaceae</taxon>
        <taxon>Taxus</taxon>
    </lineage>
</organism>
<dbReference type="EC" id="5.4.3.10" evidence="4 5"/>
<dbReference type="EC" id="4.3.1.24" evidence="3"/>
<dbReference type="EMBL" id="AY724735">
    <property type="protein sequence ID" value="AAU01182.1"/>
    <property type="molecule type" value="mRNA"/>
</dbReference>
<dbReference type="PDB" id="2YII">
    <property type="method" value="X-ray"/>
    <property type="resolution" value="2.18 A"/>
    <property type="chains" value="A/B/C/D=1-687"/>
</dbReference>
<dbReference type="PDB" id="4BAA">
    <property type="method" value="X-ray"/>
    <property type="resolution" value="2.50 A"/>
    <property type="chains" value="A/B/C/D=1-687"/>
</dbReference>
<dbReference type="PDB" id="4BAB">
    <property type="method" value="X-ray"/>
    <property type="resolution" value="2.56 A"/>
    <property type="chains" value="A/B/C/D=1-687"/>
</dbReference>
<dbReference type="PDB" id="4C5R">
    <property type="method" value="X-ray"/>
    <property type="resolution" value="2.14 A"/>
    <property type="chains" value="A/B/C/D=1-687"/>
</dbReference>
<dbReference type="PDB" id="4C5S">
    <property type="method" value="X-ray"/>
    <property type="resolution" value="1.85 A"/>
    <property type="chains" value="A/B/C/D=1-687"/>
</dbReference>
<dbReference type="PDB" id="4C5U">
    <property type="method" value="X-ray"/>
    <property type="resolution" value="2.19 A"/>
    <property type="chains" value="A/B/C/D=1-687"/>
</dbReference>
<dbReference type="PDB" id="4C6G">
    <property type="method" value="X-ray"/>
    <property type="resolution" value="2.10 A"/>
    <property type="chains" value="A/B/C/D=1-687"/>
</dbReference>
<dbReference type="PDB" id="4CQ5">
    <property type="method" value="X-ray"/>
    <property type="resolution" value="1.90 A"/>
    <property type="chains" value="A/B/C/D=1-687"/>
</dbReference>
<dbReference type="PDB" id="4V2Q">
    <property type="method" value="X-ray"/>
    <property type="resolution" value="1.95 A"/>
    <property type="chains" value="A/B=1-687"/>
</dbReference>
<dbReference type="PDB" id="4V2R">
    <property type="method" value="X-ray"/>
    <property type="resolution" value="2.20 A"/>
    <property type="chains" value="A/B=1-687"/>
</dbReference>
<dbReference type="PDBsum" id="2YII"/>
<dbReference type="PDBsum" id="4BAA"/>
<dbReference type="PDBsum" id="4BAB"/>
<dbReference type="PDBsum" id="4C5R"/>
<dbReference type="PDBsum" id="4C5S"/>
<dbReference type="PDBsum" id="4C5U"/>
<dbReference type="PDBsum" id="4C6G"/>
<dbReference type="PDBsum" id="4CQ5"/>
<dbReference type="PDBsum" id="4V2Q"/>
<dbReference type="PDBsum" id="4V2R"/>
<dbReference type="SMR" id="Q68G84"/>
<dbReference type="BRENDA" id="5.4.3.10">
    <property type="organism ID" value="9720"/>
</dbReference>
<dbReference type="BRENDA" id="5.4.3.11">
    <property type="organism ID" value="9720"/>
</dbReference>
<dbReference type="UniPathway" id="UPA00713">
    <property type="reaction ID" value="UER00725"/>
</dbReference>
<dbReference type="UniPathway" id="UPA00842"/>
<dbReference type="EvolutionaryTrace" id="Q68G84"/>
<dbReference type="GO" id="GO:0005737">
    <property type="term" value="C:cytoplasm"/>
    <property type="evidence" value="ECO:0007669"/>
    <property type="project" value="UniProtKB-SubCell"/>
</dbReference>
<dbReference type="GO" id="GO:0016869">
    <property type="term" value="F:intramolecular aminotransferase activity"/>
    <property type="evidence" value="ECO:0000314"/>
    <property type="project" value="UniProtKB"/>
</dbReference>
<dbReference type="GO" id="GO:0045548">
    <property type="term" value="F:phenylalanine ammonia-lyase activity"/>
    <property type="evidence" value="ECO:0007669"/>
    <property type="project" value="UniProtKB-EC"/>
</dbReference>
<dbReference type="GO" id="GO:0009821">
    <property type="term" value="P:alkaloid biosynthetic process"/>
    <property type="evidence" value="ECO:0000304"/>
    <property type="project" value="UniProtKB"/>
</dbReference>
<dbReference type="GO" id="GO:0009800">
    <property type="term" value="P:cinnamic acid biosynthetic process"/>
    <property type="evidence" value="ECO:0007669"/>
    <property type="project" value="UniProtKB-UniPathway"/>
</dbReference>
<dbReference type="GO" id="GO:0006559">
    <property type="term" value="P:L-phenylalanine catabolic process"/>
    <property type="evidence" value="ECO:0007669"/>
    <property type="project" value="UniProtKB-KW"/>
</dbReference>
<dbReference type="GO" id="GO:0006558">
    <property type="term" value="P:L-phenylalanine metabolic process"/>
    <property type="evidence" value="ECO:0000314"/>
    <property type="project" value="UniProtKB"/>
</dbReference>
<dbReference type="GO" id="GO:0042617">
    <property type="term" value="P:paclitaxel biosynthetic process"/>
    <property type="evidence" value="ECO:0000304"/>
    <property type="project" value="UniProtKB"/>
</dbReference>
<dbReference type="GO" id="GO:0051289">
    <property type="term" value="P:protein homotetramerization"/>
    <property type="evidence" value="ECO:0000314"/>
    <property type="project" value="UniProtKB"/>
</dbReference>
<dbReference type="CDD" id="cd00332">
    <property type="entry name" value="PAL-HAL"/>
    <property type="match status" value="1"/>
</dbReference>
<dbReference type="FunFam" id="1.10.274.20:FF:000003">
    <property type="entry name" value="Phenylalanine aminomutase (L-beta-phenylalanine forming)"/>
    <property type="match status" value="1"/>
</dbReference>
<dbReference type="Gene3D" id="1.20.200.10">
    <property type="entry name" value="Fumarase/aspartase (Central domain)"/>
    <property type="match status" value="1"/>
</dbReference>
<dbReference type="Gene3D" id="1.10.275.10">
    <property type="entry name" value="Fumarase/aspartase (N-terminal domain)"/>
    <property type="match status" value="1"/>
</dbReference>
<dbReference type="Gene3D" id="1.10.274.20">
    <property type="entry name" value="Phenylalanine ammonia-lyase 1, domain 3"/>
    <property type="match status" value="1"/>
</dbReference>
<dbReference type="InterPro" id="IPR001106">
    <property type="entry name" value="Aromatic_Lyase"/>
</dbReference>
<dbReference type="InterPro" id="IPR024083">
    <property type="entry name" value="Fumarase/histidase_N"/>
</dbReference>
<dbReference type="InterPro" id="IPR008948">
    <property type="entry name" value="L-Aspartase-like"/>
</dbReference>
<dbReference type="InterPro" id="IPR022313">
    <property type="entry name" value="Phe/His_NH3-lyase_AS"/>
</dbReference>
<dbReference type="InterPro" id="IPR005922">
    <property type="entry name" value="Phe_NH3-lyase"/>
</dbReference>
<dbReference type="InterPro" id="IPR023144">
    <property type="entry name" value="Phe_NH3-lyase_shielding_dom_sf"/>
</dbReference>
<dbReference type="InterPro" id="IPR031008">
    <property type="entry name" value="Taxol_Phe_23mut"/>
</dbReference>
<dbReference type="NCBIfam" id="TIGR01226">
    <property type="entry name" value="phe_am_lyase"/>
    <property type="match status" value="1"/>
</dbReference>
<dbReference type="NCBIfam" id="TIGR04473">
    <property type="entry name" value="taxol_Phe_23mut"/>
    <property type="match status" value="1"/>
</dbReference>
<dbReference type="PANTHER" id="PTHR10362">
    <property type="entry name" value="HISTIDINE AMMONIA-LYASE"/>
    <property type="match status" value="1"/>
</dbReference>
<dbReference type="Pfam" id="PF00221">
    <property type="entry name" value="Lyase_aromatic"/>
    <property type="match status" value="1"/>
</dbReference>
<dbReference type="SUPFAM" id="SSF48557">
    <property type="entry name" value="L-aspartase-like"/>
    <property type="match status" value="1"/>
</dbReference>
<dbReference type="PROSITE" id="PS00488">
    <property type="entry name" value="PAL_HISTIDASE"/>
    <property type="match status" value="1"/>
</dbReference>
<gene>
    <name type="primary">pam</name>
</gene>